<gene>
    <name evidence="1" type="primary">bpt</name>
    <name type="ordered locus">Pfl01_3588</name>
</gene>
<dbReference type="EC" id="2.3.2.29" evidence="1"/>
<dbReference type="EMBL" id="CP000094">
    <property type="protein sequence ID" value="ABA75326.1"/>
    <property type="molecule type" value="Genomic_DNA"/>
</dbReference>
<dbReference type="RefSeq" id="WP_011334947.1">
    <property type="nucleotide sequence ID" value="NC_007492.2"/>
</dbReference>
<dbReference type="SMR" id="Q3KA78"/>
<dbReference type="KEGG" id="pfo:Pfl01_3588"/>
<dbReference type="eggNOG" id="COG2935">
    <property type="taxonomic scope" value="Bacteria"/>
</dbReference>
<dbReference type="HOGENOM" id="CLU_077607_0_0_6"/>
<dbReference type="Proteomes" id="UP000002704">
    <property type="component" value="Chromosome"/>
</dbReference>
<dbReference type="GO" id="GO:0005737">
    <property type="term" value="C:cytoplasm"/>
    <property type="evidence" value="ECO:0007669"/>
    <property type="project" value="UniProtKB-SubCell"/>
</dbReference>
<dbReference type="GO" id="GO:0004057">
    <property type="term" value="F:arginyl-tRNA--protein transferase activity"/>
    <property type="evidence" value="ECO:0007669"/>
    <property type="project" value="InterPro"/>
</dbReference>
<dbReference type="GO" id="GO:0008914">
    <property type="term" value="F:leucyl-tRNA--protein transferase activity"/>
    <property type="evidence" value="ECO:0007669"/>
    <property type="project" value="UniProtKB-UniRule"/>
</dbReference>
<dbReference type="GO" id="GO:0071596">
    <property type="term" value="P:ubiquitin-dependent protein catabolic process via the N-end rule pathway"/>
    <property type="evidence" value="ECO:0007669"/>
    <property type="project" value="InterPro"/>
</dbReference>
<dbReference type="Gene3D" id="3.40.630.30">
    <property type="match status" value="1"/>
</dbReference>
<dbReference type="HAMAP" id="MF_00689">
    <property type="entry name" value="Bpt"/>
    <property type="match status" value="1"/>
</dbReference>
<dbReference type="InterPro" id="IPR016181">
    <property type="entry name" value="Acyl_CoA_acyltransferase"/>
</dbReference>
<dbReference type="InterPro" id="IPR017138">
    <property type="entry name" value="Asp_Glu_LeuTrfase"/>
</dbReference>
<dbReference type="InterPro" id="IPR030700">
    <property type="entry name" value="N-end_Aminoacyl_Trfase"/>
</dbReference>
<dbReference type="InterPro" id="IPR007472">
    <property type="entry name" value="N-end_Aminoacyl_Trfase_C"/>
</dbReference>
<dbReference type="InterPro" id="IPR007471">
    <property type="entry name" value="N-end_Aminoacyl_Trfase_N"/>
</dbReference>
<dbReference type="NCBIfam" id="NF002341">
    <property type="entry name" value="PRK01305.1-1"/>
    <property type="match status" value="1"/>
</dbReference>
<dbReference type="NCBIfam" id="NF002342">
    <property type="entry name" value="PRK01305.1-3"/>
    <property type="match status" value="1"/>
</dbReference>
<dbReference type="NCBIfam" id="NF002345">
    <property type="entry name" value="PRK01305.2-2"/>
    <property type="match status" value="1"/>
</dbReference>
<dbReference type="NCBIfam" id="NF002346">
    <property type="entry name" value="PRK01305.2-3"/>
    <property type="match status" value="1"/>
</dbReference>
<dbReference type="PANTHER" id="PTHR21367">
    <property type="entry name" value="ARGININE-TRNA-PROTEIN TRANSFERASE 1"/>
    <property type="match status" value="1"/>
</dbReference>
<dbReference type="PANTHER" id="PTHR21367:SF1">
    <property type="entry name" value="ARGINYL-TRNA--PROTEIN TRANSFERASE 1"/>
    <property type="match status" value="1"/>
</dbReference>
<dbReference type="Pfam" id="PF04377">
    <property type="entry name" value="ATE_C"/>
    <property type="match status" value="1"/>
</dbReference>
<dbReference type="Pfam" id="PF04376">
    <property type="entry name" value="ATE_N"/>
    <property type="match status" value="1"/>
</dbReference>
<dbReference type="PIRSF" id="PIRSF037208">
    <property type="entry name" value="ATE_pro_prd"/>
    <property type="match status" value="1"/>
</dbReference>
<dbReference type="SUPFAM" id="SSF55729">
    <property type="entry name" value="Acyl-CoA N-acyltransferases (Nat)"/>
    <property type="match status" value="1"/>
</dbReference>
<protein>
    <recommendedName>
        <fullName evidence="1">Aspartate/glutamate leucyltransferase</fullName>
        <ecNumber evidence="1">2.3.2.29</ecNumber>
    </recommendedName>
</protein>
<reference key="1">
    <citation type="journal article" date="2009" name="Genome Biol.">
        <title>Genomic and genetic analyses of diversity and plant interactions of Pseudomonas fluorescens.</title>
        <authorList>
            <person name="Silby M.W."/>
            <person name="Cerdeno-Tarraga A.M."/>
            <person name="Vernikos G.S."/>
            <person name="Giddens S.R."/>
            <person name="Jackson R.W."/>
            <person name="Preston G.M."/>
            <person name="Zhang X.-X."/>
            <person name="Moon C.D."/>
            <person name="Gehrig S.M."/>
            <person name="Godfrey S.A.C."/>
            <person name="Knight C.G."/>
            <person name="Malone J.G."/>
            <person name="Robinson Z."/>
            <person name="Spiers A.J."/>
            <person name="Harris S."/>
            <person name="Challis G.L."/>
            <person name="Yaxley A.M."/>
            <person name="Harris D."/>
            <person name="Seeger K."/>
            <person name="Murphy L."/>
            <person name="Rutter S."/>
            <person name="Squares R."/>
            <person name="Quail M.A."/>
            <person name="Saunders E."/>
            <person name="Mavromatis K."/>
            <person name="Brettin T.S."/>
            <person name="Bentley S.D."/>
            <person name="Hothersall J."/>
            <person name="Stephens E."/>
            <person name="Thomas C.M."/>
            <person name="Parkhill J."/>
            <person name="Levy S.B."/>
            <person name="Rainey P.B."/>
            <person name="Thomson N.R."/>
        </authorList>
    </citation>
    <scope>NUCLEOTIDE SEQUENCE [LARGE SCALE GENOMIC DNA]</scope>
    <source>
        <strain>Pf0-1</strain>
    </source>
</reference>
<sequence>MTELARLKFYATQPHSCSYLPEEQATTLFLDPSQPMDVHVYADLSEMGFRRSGDHLYRPHCQNCNACVPARIPVAQFNPNRQQKRIFKRNVDLQVRPVKPAFSEEYFDLYQRYIEQRHADGDMYPPSRDQFSTFLVRDLPFSRFYEFRLDGRLLAVAVTDLLPNGLSAVYTFYEPQEERRSLGRYAILWQIAEAQRLGLEAVYLGYWIKNCKKMNYKTQYRPIELLINQRWVVLN</sequence>
<proteinExistence type="inferred from homology"/>
<evidence type="ECO:0000255" key="1">
    <source>
        <dbReference type="HAMAP-Rule" id="MF_00689"/>
    </source>
</evidence>
<accession>Q3KA78</accession>
<keyword id="KW-0012">Acyltransferase</keyword>
<keyword id="KW-0963">Cytoplasm</keyword>
<keyword id="KW-0808">Transferase</keyword>
<feature type="chain" id="PRO_0000263202" description="Aspartate/glutamate leucyltransferase">
    <location>
        <begin position="1"/>
        <end position="235"/>
    </location>
</feature>
<organism>
    <name type="scientific">Pseudomonas fluorescens (strain Pf0-1)</name>
    <dbReference type="NCBI Taxonomy" id="205922"/>
    <lineage>
        <taxon>Bacteria</taxon>
        <taxon>Pseudomonadati</taxon>
        <taxon>Pseudomonadota</taxon>
        <taxon>Gammaproteobacteria</taxon>
        <taxon>Pseudomonadales</taxon>
        <taxon>Pseudomonadaceae</taxon>
        <taxon>Pseudomonas</taxon>
    </lineage>
</organism>
<comment type="function">
    <text evidence="1">Functions in the N-end rule pathway of protein degradation where it conjugates Leu from its aminoacyl-tRNA to the N-termini of proteins containing an N-terminal aspartate or glutamate.</text>
</comment>
<comment type="catalytic activity">
    <reaction evidence="1">
        <text>N-terminal L-glutamyl-[protein] + L-leucyl-tRNA(Leu) = N-terminal L-leucyl-L-glutamyl-[protein] + tRNA(Leu) + H(+)</text>
        <dbReference type="Rhea" id="RHEA:50412"/>
        <dbReference type="Rhea" id="RHEA-COMP:9613"/>
        <dbReference type="Rhea" id="RHEA-COMP:9622"/>
        <dbReference type="Rhea" id="RHEA-COMP:12664"/>
        <dbReference type="Rhea" id="RHEA-COMP:12668"/>
        <dbReference type="ChEBI" id="CHEBI:15378"/>
        <dbReference type="ChEBI" id="CHEBI:64721"/>
        <dbReference type="ChEBI" id="CHEBI:78442"/>
        <dbReference type="ChEBI" id="CHEBI:78494"/>
        <dbReference type="ChEBI" id="CHEBI:133041"/>
        <dbReference type="EC" id="2.3.2.29"/>
    </reaction>
</comment>
<comment type="catalytic activity">
    <reaction evidence="1">
        <text>N-terminal L-aspartyl-[protein] + L-leucyl-tRNA(Leu) = N-terminal L-leucyl-L-aspartyl-[protein] + tRNA(Leu) + H(+)</text>
        <dbReference type="Rhea" id="RHEA:50420"/>
        <dbReference type="Rhea" id="RHEA-COMP:9613"/>
        <dbReference type="Rhea" id="RHEA-COMP:9622"/>
        <dbReference type="Rhea" id="RHEA-COMP:12669"/>
        <dbReference type="Rhea" id="RHEA-COMP:12674"/>
        <dbReference type="ChEBI" id="CHEBI:15378"/>
        <dbReference type="ChEBI" id="CHEBI:64720"/>
        <dbReference type="ChEBI" id="CHEBI:78442"/>
        <dbReference type="ChEBI" id="CHEBI:78494"/>
        <dbReference type="ChEBI" id="CHEBI:133042"/>
        <dbReference type="EC" id="2.3.2.29"/>
    </reaction>
</comment>
<comment type="subcellular location">
    <subcellularLocation>
        <location evidence="1">Cytoplasm</location>
    </subcellularLocation>
</comment>
<comment type="similarity">
    <text evidence="1">Belongs to the R-transferase family. Bpt subfamily.</text>
</comment>
<name>BPT_PSEPF</name>